<organism>
    <name type="scientific">Helicobacter acinonychis (strain Sheeba)</name>
    <dbReference type="NCBI Taxonomy" id="382638"/>
    <lineage>
        <taxon>Bacteria</taxon>
        <taxon>Pseudomonadati</taxon>
        <taxon>Campylobacterota</taxon>
        <taxon>Epsilonproteobacteria</taxon>
        <taxon>Campylobacterales</taxon>
        <taxon>Helicobacteraceae</taxon>
        <taxon>Helicobacter</taxon>
    </lineage>
</organism>
<name>RPOBC_HELAH</name>
<gene>
    <name type="primary">rpoBC</name>
    <name type="ordered locus">Hac_1578</name>
</gene>
<accession>Q17VN6</accession>
<dbReference type="EC" id="2.7.7.6" evidence="2 3"/>
<dbReference type="EMBL" id="AM260522">
    <property type="protein sequence ID" value="CAK00290.1"/>
    <property type="molecule type" value="Genomic_DNA"/>
</dbReference>
<dbReference type="RefSeq" id="WP_011578373.1">
    <property type="nucleotide sequence ID" value="NC_008229.1"/>
</dbReference>
<dbReference type="SMR" id="Q17VN6"/>
<dbReference type="STRING" id="382638.Hac_1578"/>
<dbReference type="GeneID" id="31758830"/>
<dbReference type="KEGG" id="hac:Hac_1578"/>
<dbReference type="eggNOG" id="COG0085">
    <property type="taxonomic scope" value="Bacteria"/>
</dbReference>
<dbReference type="eggNOG" id="COG0086">
    <property type="taxonomic scope" value="Bacteria"/>
</dbReference>
<dbReference type="HOGENOM" id="CLU_000524_0_0_7"/>
<dbReference type="OrthoDB" id="9815296at2"/>
<dbReference type="BioCyc" id="HACI382638:HAC_RS06645-MONOMER"/>
<dbReference type="Proteomes" id="UP000000775">
    <property type="component" value="Chromosome"/>
</dbReference>
<dbReference type="GO" id="GO:0000428">
    <property type="term" value="C:DNA-directed RNA polymerase complex"/>
    <property type="evidence" value="ECO:0007669"/>
    <property type="project" value="UniProtKB-KW"/>
</dbReference>
<dbReference type="GO" id="GO:0003677">
    <property type="term" value="F:DNA binding"/>
    <property type="evidence" value="ECO:0007669"/>
    <property type="project" value="UniProtKB-UniRule"/>
</dbReference>
<dbReference type="GO" id="GO:0003899">
    <property type="term" value="F:DNA-directed RNA polymerase activity"/>
    <property type="evidence" value="ECO:0007669"/>
    <property type="project" value="UniProtKB-UniRule"/>
</dbReference>
<dbReference type="GO" id="GO:0000287">
    <property type="term" value="F:magnesium ion binding"/>
    <property type="evidence" value="ECO:0007669"/>
    <property type="project" value="UniProtKB-UniRule"/>
</dbReference>
<dbReference type="GO" id="GO:0032549">
    <property type="term" value="F:ribonucleoside binding"/>
    <property type="evidence" value="ECO:0007669"/>
    <property type="project" value="InterPro"/>
</dbReference>
<dbReference type="GO" id="GO:0008270">
    <property type="term" value="F:zinc ion binding"/>
    <property type="evidence" value="ECO:0007669"/>
    <property type="project" value="UniProtKB-UniRule"/>
</dbReference>
<dbReference type="GO" id="GO:0006351">
    <property type="term" value="P:DNA-templated transcription"/>
    <property type="evidence" value="ECO:0007669"/>
    <property type="project" value="UniProtKB-UniRule"/>
</dbReference>
<dbReference type="CDD" id="cd00653">
    <property type="entry name" value="RNA_pol_B_RPB2"/>
    <property type="match status" value="1"/>
</dbReference>
<dbReference type="CDD" id="cd02655">
    <property type="entry name" value="RNAP_beta'_C"/>
    <property type="match status" value="1"/>
</dbReference>
<dbReference type="CDD" id="cd01609">
    <property type="entry name" value="RNAP_beta'_N"/>
    <property type="match status" value="1"/>
</dbReference>
<dbReference type="FunFam" id="1.10.132.30:FF:000003">
    <property type="entry name" value="DNA-directed RNA polymerase subunit beta"/>
    <property type="match status" value="1"/>
</dbReference>
<dbReference type="Gene3D" id="1.10.132.30">
    <property type="match status" value="1"/>
</dbReference>
<dbReference type="Gene3D" id="1.10.150.390">
    <property type="match status" value="1"/>
</dbReference>
<dbReference type="Gene3D" id="1.10.1790.20">
    <property type="match status" value="1"/>
</dbReference>
<dbReference type="Gene3D" id="1.10.40.90">
    <property type="match status" value="1"/>
</dbReference>
<dbReference type="Gene3D" id="2.40.40.20">
    <property type="match status" value="1"/>
</dbReference>
<dbReference type="Gene3D" id="2.40.50.100">
    <property type="match status" value="4"/>
</dbReference>
<dbReference type="Gene3D" id="2.40.50.150">
    <property type="match status" value="1"/>
</dbReference>
<dbReference type="Gene3D" id="3.90.1100.10">
    <property type="match status" value="2"/>
</dbReference>
<dbReference type="Gene3D" id="2.30.150.10">
    <property type="entry name" value="DNA-directed RNA polymerase, beta subunit, external 1 domain"/>
    <property type="match status" value="1"/>
</dbReference>
<dbReference type="Gene3D" id="2.40.270.10">
    <property type="entry name" value="DNA-directed RNA polymerase, subunit 2, domain 6"/>
    <property type="match status" value="1"/>
</dbReference>
<dbReference type="Gene3D" id="3.90.1800.10">
    <property type="entry name" value="RNA polymerase alpha subunit dimerisation domain"/>
    <property type="match status" value="1"/>
</dbReference>
<dbReference type="Gene3D" id="4.10.860.120">
    <property type="entry name" value="RNA polymerase II, clamp domain"/>
    <property type="match status" value="1"/>
</dbReference>
<dbReference type="Gene3D" id="1.10.274.100">
    <property type="entry name" value="RNA polymerase Rpb1, domain 3"/>
    <property type="match status" value="2"/>
</dbReference>
<dbReference type="Gene3D" id="3.90.1110.10">
    <property type="entry name" value="RNA polymerase Rpb2, domain 2"/>
    <property type="match status" value="1"/>
</dbReference>
<dbReference type="HAMAP" id="MF_01321">
    <property type="entry name" value="RNApol_bact_RpoB"/>
    <property type="match status" value="1"/>
</dbReference>
<dbReference type="HAMAP" id="MF_01322">
    <property type="entry name" value="RNApol_bact_RpoC"/>
    <property type="match status" value="1"/>
</dbReference>
<dbReference type="InterPro" id="IPR042107">
    <property type="entry name" value="DNA-dir_RNA_pol_bsu_ext_1_sf"/>
</dbReference>
<dbReference type="InterPro" id="IPR019462">
    <property type="entry name" value="DNA-dir_RNA_pol_bsu_external_1"/>
</dbReference>
<dbReference type="InterPro" id="IPR015712">
    <property type="entry name" value="DNA-dir_RNA_pol_su2"/>
</dbReference>
<dbReference type="InterPro" id="IPR007120">
    <property type="entry name" value="DNA-dir_RNAP_su2_dom"/>
</dbReference>
<dbReference type="InterPro" id="IPR037033">
    <property type="entry name" value="DNA-dir_RNAP_su2_hyb_sf"/>
</dbReference>
<dbReference type="InterPro" id="IPR045867">
    <property type="entry name" value="DNA-dir_RpoC_beta_prime"/>
</dbReference>
<dbReference type="InterPro" id="IPR012754">
    <property type="entry name" value="DNA-dir_RpoC_beta_prime_bact"/>
</dbReference>
<dbReference type="InterPro" id="IPR000722">
    <property type="entry name" value="RNA_pol_asu"/>
</dbReference>
<dbReference type="InterPro" id="IPR010243">
    <property type="entry name" value="RNA_pol_bsu_bac"/>
</dbReference>
<dbReference type="InterPro" id="IPR007121">
    <property type="entry name" value="RNA_pol_bsu_CS"/>
</dbReference>
<dbReference type="InterPro" id="IPR007644">
    <property type="entry name" value="RNA_pol_bsu_protrusion"/>
</dbReference>
<dbReference type="InterPro" id="IPR006592">
    <property type="entry name" value="RNA_pol_N"/>
</dbReference>
<dbReference type="InterPro" id="IPR007080">
    <property type="entry name" value="RNA_pol_Rpb1_1"/>
</dbReference>
<dbReference type="InterPro" id="IPR007066">
    <property type="entry name" value="RNA_pol_Rpb1_3"/>
</dbReference>
<dbReference type="InterPro" id="IPR042102">
    <property type="entry name" value="RNA_pol_Rpb1_3_sf"/>
</dbReference>
<dbReference type="InterPro" id="IPR007083">
    <property type="entry name" value="RNA_pol_Rpb1_4"/>
</dbReference>
<dbReference type="InterPro" id="IPR007081">
    <property type="entry name" value="RNA_pol_Rpb1_5"/>
</dbReference>
<dbReference type="InterPro" id="IPR044893">
    <property type="entry name" value="RNA_pol_Rpb1_clamp_domain"/>
</dbReference>
<dbReference type="InterPro" id="IPR007642">
    <property type="entry name" value="RNA_pol_Rpb2_2"/>
</dbReference>
<dbReference type="InterPro" id="IPR037034">
    <property type="entry name" value="RNA_pol_Rpb2_2_sf"/>
</dbReference>
<dbReference type="InterPro" id="IPR007645">
    <property type="entry name" value="RNA_pol_Rpb2_3"/>
</dbReference>
<dbReference type="InterPro" id="IPR007641">
    <property type="entry name" value="RNA_pol_Rpb2_7"/>
</dbReference>
<dbReference type="InterPro" id="IPR014724">
    <property type="entry name" value="RNA_pol_RPB2_OB-fold"/>
</dbReference>
<dbReference type="InterPro" id="IPR038120">
    <property type="entry name" value="Rpb1_funnel_sf"/>
</dbReference>
<dbReference type="NCBIfam" id="NF001616">
    <property type="entry name" value="PRK00405.1"/>
    <property type="match status" value="1"/>
</dbReference>
<dbReference type="NCBIfam" id="NF007172">
    <property type="entry name" value="PRK09603.1"/>
    <property type="match status" value="1"/>
</dbReference>
<dbReference type="NCBIfam" id="TIGR02013">
    <property type="entry name" value="rpoB"/>
    <property type="match status" value="1"/>
</dbReference>
<dbReference type="NCBIfam" id="TIGR02386">
    <property type="entry name" value="rpoC_TIGR"/>
    <property type="match status" value="1"/>
</dbReference>
<dbReference type="PANTHER" id="PTHR19376">
    <property type="entry name" value="DNA-DIRECTED RNA POLYMERASE"/>
    <property type="match status" value="1"/>
</dbReference>
<dbReference type="PANTHER" id="PTHR19376:SF54">
    <property type="entry name" value="DNA-DIRECTED RNA POLYMERASE SUBUNIT BETA"/>
    <property type="match status" value="1"/>
</dbReference>
<dbReference type="Pfam" id="PF04997">
    <property type="entry name" value="RNA_pol_Rpb1_1"/>
    <property type="match status" value="1"/>
</dbReference>
<dbReference type="Pfam" id="PF00623">
    <property type="entry name" value="RNA_pol_Rpb1_2"/>
    <property type="match status" value="1"/>
</dbReference>
<dbReference type="Pfam" id="PF04983">
    <property type="entry name" value="RNA_pol_Rpb1_3"/>
    <property type="match status" value="1"/>
</dbReference>
<dbReference type="Pfam" id="PF05000">
    <property type="entry name" value="RNA_pol_Rpb1_4"/>
    <property type="match status" value="1"/>
</dbReference>
<dbReference type="Pfam" id="PF04998">
    <property type="entry name" value="RNA_pol_Rpb1_5"/>
    <property type="match status" value="1"/>
</dbReference>
<dbReference type="Pfam" id="PF04563">
    <property type="entry name" value="RNA_pol_Rpb2_1"/>
    <property type="match status" value="1"/>
</dbReference>
<dbReference type="Pfam" id="PF04561">
    <property type="entry name" value="RNA_pol_Rpb2_2"/>
    <property type="match status" value="2"/>
</dbReference>
<dbReference type="Pfam" id="PF04565">
    <property type="entry name" value="RNA_pol_Rpb2_3"/>
    <property type="match status" value="1"/>
</dbReference>
<dbReference type="Pfam" id="PF10385">
    <property type="entry name" value="RNA_pol_Rpb2_45"/>
    <property type="match status" value="1"/>
</dbReference>
<dbReference type="Pfam" id="PF00562">
    <property type="entry name" value="RNA_pol_Rpb2_6"/>
    <property type="match status" value="1"/>
</dbReference>
<dbReference type="Pfam" id="PF04560">
    <property type="entry name" value="RNA_pol_Rpb2_7"/>
    <property type="match status" value="1"/>
</dbReference>
<dbReference type="SMART" id="SM00663">
    <property type="entry name" value="RPOLA_N"/>
    <property type="match status" value="1"/>
</dbReference>
<dbReference type="SUPFAM" id="SSF64484">
    <property type="entry name" value="beta and beta-prime subunits of DNA dependent RNA-polymerase"/>
    <property type="match status" value="2"/>
</dbReference>
<dbReference type="PROSITE" id="PS01166">
    <property type="entry name" value="RNA_POL_BETA"/>
    <property type="match status" value="1"/>
</dbReference>
<keyword id="KW-0240">DNA-directed RNA polymerase</keyword>
<keyword id="KW-0460">Magnesium</keyword>
<keyword id="KW-0479">Metal-binding</keyword>
<keyword id="KW-0548">Nucleotidyltransferase</keyword>
<keyword id="KW-0804">Transcription</keyword>
<keyword id="KW-0808">Transferase</keyword>
<keyword id="KW-0862">Zinc</keyword>
<sequence length="2890" mass="323896">MSKKIPLKNRLRADFTKTPTDLEVPNLLLLQRDSYDSFLYSKDGKESGIEKVFKSIFPIQDAQNRITLEYAGCEFGKAKYTVREAMERGITYSIPLKIKVRLILWEKDAKNGEKTGIKDIKEQSIFIREIPLMTEHTSFIINGVERVVVNQLHRSPGVIFKEEESSTSLNKLIYTGQIIPDRGSWLYFEYDSKDILYARINKRRKVPVTILFRAMDYQKQDIIKIFYPLVKVRYENDKYLIPFASLDANQRMEFDLKDAQGKTILLAGKKLTPRKIKELKENHLEWVEYPMDILLNRYLAEPVMAGKEILLDMLTQLDKNKLDKIHDLGVQEFVIINDLALGHDASIIHSFLADYESLRLLKQTEKIDDENALAAIRIYKVMRPGEPITTEVAKQFVKQLFFDPERYDLTMVGRMKMNHKLGLHVPDYITTLTHEDIITTVKYLMKIKNNQGKIDDRDHLGNRRIRAVGELLANELHSGLVKMQKTIKDKLTTMSGAFDSLMPHDLVNSKMITSTIMEFFMGGQLSQFMDQTNPLSEVTHKRRLSALGEGGLVKDRVGFEARDVHPTHYGRICPIETPEGQNIGLINTLSTFTRVNDLGFIEAPYKKVVDGKVMGETIYLTAIQEDSHVIAPASTPIDEEGNILGDLIETRVEGEIVLNEKSKVTLMDLSSSMLVGVAASLIPFLEHDDANRALMGTNMQRQAVPLLRSDAPIVGTGIEKIIARDSWGAIKANRAGVVEKIDSKNIYILGEGKEEAYIDAYSLQKNLRTNQNTSFNQVPIVKVGDKVEAGQIIADGPSMDRGELALGKNVRVAFMPWNGYNFEDAIVVSERITKDDIFTSTHIYEKEVDARELKHGVEEFTADIPDVKEEALAHLDESGIVKVGTYVSAGMILVGKTSPKGEIKSTPEERLLRAIFGDKAGHVVNKSLYCPPSLEGTVIDVKVFTKKGYEKDARVLSAYEEEKAKLDMEHFDRLTMLNREELLRVSSLLSQAILEEPFSHNGKDYKEGDQIPKEVIASINRFTLASLVKKYSKEVQNQYEITKNNFLEQKKVLGEEHEEKLSILEKDDILPNGVIKKVKLYIATKRKLKVGDKMAGRHGNKGIVSNIVPVADMPYTADGEPVDIVLNPLGVPSRMNIGQILEMHLGLVGKEFGKQIASMLENQTRDFVKELRTKMLEIANAINEKDLLTIHALENCSDEELLEYAKDWSRGVKLAIPVFEGISQEKFYKLFELAKIAMDGKMDLYDGRTGEKMRERVNVGYMYMIKLHHLVDEKVHARSTGPYSLVTHQPVGGKALFGGQRFGEMEVWALEAYGAAHTLKEMLTIKSDDIRGRENAYRAIAKGEQVGESEIPETFYVLTKELQSLALDINIFGDEMDEDGMPKPIVIKEDDRPKDFSSFQLTLASPEKIHSWSYGEVKKPETINYRTLKPERDGLFCMKIFGPTKDYECLCGKYKKPRFKDIGTCEKCGVAITHSKVRRFRMGHIELATPVAHIWYVNSLPSRIGTLLGVKMKDLERVLYYEAYIVKEPGEAAYDNEGTKLVAKYDILNEEQYQNISRRYEDRGFVAQMGGEAIKDLLEEIDLIVLLQSLKEEVKETNSDAKKKKLIKRLKVVESFLNSGNRPEWMMLTVLPVLPPDLRPLVALDGGKFAVSDVNELYRRVINRNQRLKRLMELGAPEIIVRNEKRMLQEAVDVLFDNGRSTNAVKGANKRPLKSLSEIIKGKQGRFRQNLLGKRVDFSGRSVIVVGPNLKMDECGLPKNMALELFKPHLLSKLEERGYATTLKQAKRMIEQKSSEVWECLQEITEGYPVLLNRAPTLHKQSIQAFHPKLIDGKAIQLHPLVCSAFNADFDGDQMAVHVPLSQEAIAECKVLMLSSMNILLPASGKAVAIPSQDMVLGLYYLSLEKSGVKGEHKLFSSVNEIITAIDTKELDIHAKIRVLDKGNIIATSAGRMIIRSILPDFIPTDLWNRPMKKKDIGVLVDYVHKVGGIGITATFLDNLKTLGFRYATKAGISISMEDIITPKDKQKMVEKAKVEVKKIQQQYDQGLLTDQERYNKIIDTWTEVNDKMSKEMMTAIAKDKEGFNSIYMMADSGARGSAAQIRQLSAMRGLMTKPDGSIIETPIISNFKEGLNVLEYFNSTHGARKGLADTALKTANAGYLTRKLIDVSQNVKVVSDDCGTHEGIEITDIAVGSELIEPLEERIFGRVLLEDVIDPITNEILLYADTLIDEESAKKVVEAGIKSITIRTPVTCKAPKGVCAKCYGLNLGEGKMSYPGEAVGVVAAQSIGEPGTQLTLRTFHVGGTASRSQDEREIVASKEGFVRFYNLKTYTNKEGKNIIANRRNASILVVEPKIKAPFDGELSIETVYEEVIVSVKNGEQEAKFVLRRSDIVKPSELAGVGGKIEGKVYLHYANGHKIHKGGSIADIIQEGWNVPNRIPYASELLVKDNDPIVQDVYVKEKGVIKYYVLEVNHLERTHGIKKGDMVSEKGLFAVIADDNGREAARHYIARGSEILIDDNSEVSANSLISKPTTNTLKTIATWDPYNTPIIADFEGKVSFVDIIAGVTVAEKEDENTGITSLVVNDYIPSGYKPSLFLEGVNGEEVRYFLEPKTSIAISDGSSVEQAEVLAKIPKATVKSKDITGGLPRVSELFEARKPKPKDVAILSEIDGIVSFGKAIRNKEHIIVTSKDGRKMDYLVDKGKQILVHADEFVHAGEAMTDGVVSNHDILRISGEKELYKYIVSEVQQVYRRQGVSIADKHIEIIVSQMLRQVRILDSGDSKFIEGDLVSKKLFKEENARVIALKGEPAIAEPVLLGITRAAIGSDSIISAASFQETTKVLTEASIAMKKDFLEDLKENVVLGRMIPVGTGMYKNKKIVLRTIEDSPKI</sequence>
<evidence type="ECO:0000250" key="1">
    <source>
        <dbReference type="UniProtKB" id="O25806"/>
    </source>
</evidence>
<evidence type="ECO:0000255" key="2">
    <source>
        <dbReference type="HAMAP-Rule" id="MF_01321"/>
    </source>
</evidence>
<evidence type="ECO:0000255" key="3">
    <source>
        <dbReference type="HAMAP-Rule" id="MF_01322"/>
    </source>
</evidence>
<evidence type="ECO:0000305" key="4"/>
<reference key="1">
    <citation type="journal article" date="2006" name="PLoS Genet.">
        <title>Who ate whom? Adaptive Helicobacter genomic changes that accompanied a host jump from early humans to large felines.</title>
        <authorList>
            <person name="Eppinger M."/>
            <person name="Baar C."/>
            <person name="Linz B."/>
            <person name="Raddatz G."/>
            <person name="Lanz C."/>
            <person name="Keller H."/>
            <person name="Morelli G."/>
            <person name="Gressmann H."/>
            <person name="Achtman M."/>
            <person name="Schuster S.C."/>
        </authorList>
    </citation>
    <scope>NUCLEOTIDE SEQUENCE [LARGE SCALE GENOMIC DNA]</scope>
    <source>
        <strain>Sheeba</strain>
    </source>
</reference>
<comment type="function">
    <text evidence="2 3">DNA-dependent RNA polymerase catalyzes the transcription of DNA into RNA using the four ribonucleoside triphosphates as substrates.</text>
</comment>
<comment type="catalytic activity">
    <reaction evidence="2 3">
        <text>RNA(n) + a ribonucleoside 5'-triphosphate = RNA(n+1) + diphosphate</text>
        <dbReference type="Rhea" id="RHEA:21248"/>
        <dbReference type="Rhea" id="RHEA-COMP:14527"/>
        <dbReference type="Rhea" id="RHEA-COMP:17342"/>
        <dbReference type="ChEBI" id="CHEBI:33019"/>
        <dbReference type="ChEBI" id="CHEBI:61557"/>
        <dbReference type="ChEBI" id="CHEBI:140395"/>
        <dbReference type="EC" id="2.7.7.6"/>
    </reaction>
</comment>
<comment type="cofactor">
    <cofactor evidence="3">
        <name>Mg(2+)</name>
        <dbReference type="ChEBI" id="CHEBI:18420"/>
    </cofactor>
    <text evidence="3">Binds 1 Mg(2+) ion per subunit.</text>
</comment>
<comment type="cofactor">
    <cofactor evidence="3">
        <name>Zn(2+)</name>
        <dbReference type="ChEBI" id="CHEBI:29105"/>
    </cofactor>
    <text evidence="3">Binds 2 Zn(2+) ions per subunit.</text>
</comment>
<comment type="subunit">
    <text evidence="2 3">The RNAP catalytic core consists of 2 alpha, 1 beta/beta' and 1 omega subunit. When a sigma factor is associated with the core the holoenzyme is formed, which can initiate transcription.</text>
</comment>
<comment type="miscellaneous">
    <text evidence="1">Fusion of rpoB and rpoC occurs naturally in Helicobacter species and at least some Wolbachia; the protein has been artificially split in two in H.pylori. The split protein seems to function normally.</text>
</comment>
<comment type="similarity">
    <text evidence="4">In the N-terminal section; belongs to the RNA polymerase beta chain family.</text>
</comment>
<comment type="similarity">
    <text evidence="4">In the C-terminal section; belongs to the RNA polymerase beta' chain family.</text>
</comment>
<proteinExistence type="inferred from homology"/>
<feature type="chain" id="PRO_0000300129" description="Bifunctional DNA-directed RNA polymerase subunit beta-beta'">
    <location>
        <begin position="1"/>
        <end position="2890"/>
    </location>
</feature>
<feature type="region of interest" description="DNA-directed RNA polymerase subunit beta">
    <location>
        <begin position="1"/>
        <end position="1377"/>
    </location>
</feature>
<feature type="region of interest" description="DNA-directed RNA polymerase subunit beta'">
    <location>
        <begin position="1384"/>
        <end position="2890"/>
    </location>
</feature>
<feature type="binding site" evidence="3">
    <location>
        <position position="1449"/>
    </location>
    <ligand>
        <name>Zn(2+)</name>
        <dbReference type="ChEBI" id="CHEBI:29105"/>
        <label>1</label>
    </ligand>
</feature>
<feature type="binding site" evidence="3">
    <location>
        <position position="1451"/>
    </location>
    <ligand>
        <name>Zn(2+)</name>
        <dbReference type="ChEBI" id="CHEBI:29105"/>
        <label>1</label>
    </ligand>
</feature>
<feature type="binding site" evidence="3">
    <location>
        <position position="1465"/>
    </location>
    <ligand>
        <name>Zn(2+)</name>
        <dbReference type="ChEBI" id="CHEBI:29105"/>
        <label>1</label>
    </ligand>
</feature>
<feature type="binding site" evidence="3">
    <location>
        <position position="1468"/>
    </location>
    <ligand>
        <name>Zn(2+)</name>
        <dbReference type="ChEBI" id="CHEBI:29105"/>
        <label>1</label>
    </ligand>
</feature>
<feature type="binding site" evidence="3">
    <location>
        <position position="1849"/>
    </location>
    <ligand>
        <name>Mg(2+)</name>
        <dbReference type="ChEBI" id="CHEBI:18420"/>
    </ligand>
</feature>
<feature type="binding site" evidence="3">
    <location>
        <position position="1851"/>
    </location>
    <ligand>
        <name>Mg(2+)</name>
        <dbReference type="ChEBI" id="CHEBI:18420"/>
    </ligand>
</feature>
<feature type="binding site" evidence="3">
    <location>
        <position position="1853"/>
    </location>
    <ligand>
        <name>Mg(2+)</name>
        <dbReference type="ChEBI" id="CHEBI:18420"/>
    </ligand>
</feature>
<feature type="binding site" evidence="3">
    <location>
        <position position="2179"/>
    </location>
    <ligand>
        <name>Zn(2+)</name>
        <dbReference type="ChEBI" id="CHEBI:29105"/>
        <label>2</label>
    </ligand>
</feature>
<feature type="binding site" evidence="3">
    <location>
        <position position="2253"/>
    </location>
    <ligand>
        <name>Zn(2+)</name>
        <dbReference type="ChEBI" id="CHEBI:29105"/>
        <label>2</label>
    </ligand>
</feature>
<feature type="binding site" evidence="3">
    <location>
        <position position="2260"/>
    </location>
    <ligand>
        <name>Zn(2+)</name>
        <dbReference type="ChEBI" id="CHEBI:29105"/>
        <label>2</label>
    </ligand>
</feature>
<feature type="binding site" evidence="3">
    <location>
        <position position="2263"/>
    </location>
    <ligand>
        <name>Zn(2+)</name>
        <dbReference type="ChEBI" id="CHEBI:29105"/>
        <label>2</label>
    </ligand>
</feature>
<protein>
    <recommendedName>
        <fullName>Bifunctional DNA-directed RNA polymerase subunit beta-beta'</fullName>
        <ecNumber evidence="2 3">2.7.7.6</ecNumber>
    </recommendedName>
    <domain>
        <recommendedName>
            <fullName evidence="2">DNA-directed RNA polymerase subunit beta</fullName>
        </recommendedName>
        <alternativeName>
            <fullName evidence="2">RNA polymerase subunit beta</fullName>
        </alternativeName>
        <alternativeName>
            <fullName evidence="2">Transcriptase subunit beta</fullName>
        </alternativeName>
    </domain>
    <domain>
        <recommendedName>
            <fullName evidence="3">DNA-directed RNA polymerase subunit beta'</fullName>
        </recommendedName>
        <alternativeName>
            <fullName evidence="3">RNA polymerase beta'</fullName>
        </alternativeName>
        <alternativeName>
            <fullName evidence="3">Transcriptase subunit beta'</fullName>
        </alternativeName>
    </domain>
</protein>